<evidence type="ECO:0000255" key="1"/>
<evidence type="ECO:0000305" key="2"/>
<sequence length="96" mass="11259">MYINFTSFLIKEKKYNVRFLLSRNRKIYAAVGEGHLSGFVTKNHKISRLSFIFSKKKKVFFTIFDTIITIIVRSGIPFPLLCSFGRNKIYILFNVL</sequence>
<dbReference type="EMBL" id="Z49213">
    <property type="status" value="NOT_ANNOTATED_CDS"/>
    <property type="molecule type" value="Genomic_DNA"/>
</dbReference>
<dbReference type="EMBL" id="BK006946">
    <property type="protein sequence ID" value="DAA09931.1"/>
    <property type="molecule type" value="Genomic_DNA"/>
</dbReference>
<dbReference type="RefSeq" id="NP_878141.1">
    <property type="nucleotide sequence ID" value="NM_001184572.1"/>
</dbReference>
<dbReference type="BioGRID" id="37041">
    <property type="interactions" value="176"/>
</dbReference>
<dbReference type="FunCoup" id="Q3E760">
    <property type="interactions" value="3"/>
</dbReference>
<dbReference type="GlyGen" id="Q3E760">
    <property type="glycosylation" value="1 site"/>
</dbReference>
<dbReference type="PaxDb" id="4932-YMR030W-A"/>
<dbReference type="EnsemblFungi" id="YMR030W-A_mRNA">
    <property type="protein sequence ID" value="YMR030W-A"/>
    <property type="gene ID" value="YMR030W-A"/>
</dbReference>
<dbReference type="GeneID" id="1466499"/>
<dbReference type="KEGG" id="sce:YMR030W-A"/>
<dbReference type="AGR" id="SGD:S000028574"/>
<dbReference type="SGD" id="S000028574">
    <property type="gene designation" value="YMR030W-A"/>
</dbReference>
<dbReference type="VEuPathDB" id="FungiDB:YMR030W-A"/>
<dbReference type="HOGENOM" id="CLU_2361355_0_0_1"/>
<dbReference type="InParanoid" id="Q3E760"/>
<dbReference type="BioCyc" id="YEAST:G3O-33027-MONOMER"/>
<dbReference type="BioGRID-ORCS" id="1466499">
    <property type="hits" value="0 hits in 10 CRISPR screens"/>
</dbReference>
<dbReference type="PRO" id="PR:Q3E760"/>
<dbReference type="Proteomes" id="UP000002311">
    <property type="component" value="Chromosome XIII"/>
</dbReference>
<dbReference type="RNAct" id="Q3E760">
    <property type="molecule type" value="protein"/>
</dbReference>
<dbReference type="GO" id="GO:0016020">
    <property type="term" value="C:membrane"/>
    <property type="evidence" value="ECO:0007669"/>
    <property type="project" value="UniProtKB-SubCell"/>
</dbReference>
<proteinExistence type="predicted"/>
<accession>Q3E760</accession>
<accession>D6VZK7</accession>
<keyword id="KW-0325">Glycoprotein</keyword>
<keyword id="KW-0472">Membrane</keyword>
<keyword id="KW-1185">Reference proteome</keyword>
<keyword id="KW-0812">Transmembrane</keyword>
<keyword id="KW-1133">Transmembrane helix</keyword>
<protein>
    <recommendedName>
        <fullName>Uncharacterized protein YMR030W-A</fullName>
    </recommendedName>
</protein>
<gene>
    <name type="ordered locus">YMR030W-A</name>
</gene>
<reference key="1">
    <citation type="journal article" date="1997" name="Nature">
        <title>The nucleotide sequence of Saccharomyces cerevisiae chromosome XIII.</title>
        <authorList>
            <person name="Bowman S."/>
            <person name="Churcher C.M."/>
            <person name="Badcock K."/>
            <person name="Brown D."/>
            <person name="Chillingworth T."/>
            <person name="Connor R."/>
            <person name="Dedman K."/>
            <person name="Devlin K."/>
            <person name="Gentles S."/>
            <person name="Hamlin N."/>
            <person name="Hunt S."/>
            <person name="Jagels K."/>
            <person name="Lye G."/>
            <person name="Moule S."/>
            <person name="Odell C."/>
            <person name="Pearson D."/>
            <person name="Rajandream M.A."/>
            <person name="Rice P."/>
            <person name="Skelton J."/>
            <person name="Walsh S.V."/>
            <person name="Whitehead S."/>
            <person name="Barrell B.G."/>
        </authorList>
    </citation>
    <scope>NUCLEOTIDE SEQUENCE [LARGE SCALE GENOMIC DNA]</scope>
    <source>
        <strain>ATCC 204508 / S288c</strain>
    </source>
</reference>
<reference key="2">
    <citation type="journal article" date="2014" name="G3 (Bethesda)">
        <title>The reference genome sequence of Saccharomyces cerevisiae: Then and now.</title>
        <authorList>
            <person name="Engel S.R."/>
            <person name="Dietrich F.S."/>
            <person name="Fisk D.G."/>
            <person name="Binkley G."/>
            <person name="Balakrishnan R."/>
            <person name="Costanzo M.C."/>
            <person name="Dwight S.S."/>
            <person name="Hitz B.C."/>
            <person name="Karra K."/>
            <person name="Nash R.S."/>
            <person name="Weng S."/>
            <person name="Wong E.D."/>
            <person name="Lloyd P."/>
            <person name="Skrzypek M.S."/>
            <person name="Miyasato S.R."/>
            <person name="Simison M."/>
            <person name="Cherry J.M."/>
        </authorList>
    </citation>
    <scope>GENOME REANNOTATION</scope>
    <source>
        <strain>ATCC 204508 / S288c</strain>
    </source>
</reference>
<reference key="3">
    <citation type="journal article" date="2003" name="Genome Res.">
        <title>Systematic discovery of new genes in the Saccharomyces cerevisiae genome.</title>
        <authorList>
            <person name="Kessler M.M."/>
            <person name="Zeng Q."/>
            <person name="Hogan S."/>
            <person name="Cook R."/>
            <person name="Morales A.J."/>
            <person name="Cottarel G."/>
        </authorList>
    </citation>
    <scope>GENOME REANNOTATION</scope>
</reference>
<organism>
    <name type="scientific">Saccharomyces cerevisiae (strain ATCC 204508 / S288c)</name>
    <name type="common">Baker's yeast</name>
    <dbReference type="NCBI Taxonomy" id="559292"/>
    <lineage>
        <taxon>Eukaryota</taxon>
        <taxon>Fungi</taxon>
        <taxon>Dikarya</taxon>
        <taxon>Ascomycota</taxon>
        <taxon>Saccharomycotina</taxon>
        <taxon>Saccharomycetes</taxon>
        <taxon>Saccharomycetales</taxon>
        <taxon>Saccharomycetaceae</taxon>
        <taxon>Saccharomyces</taxon>
    </lineage>
</organism>
<comment type="subcellular location">
    <subcellularLocation>
        <location evidence="2">Membrane</location>
        <topology evidence="2">Single-pass membrane protein</topology>
    </subcellularLocation>
</comment>
<feature type="chain" id="PRO_0000247785" description="Uncharacterized protein YMR030W-A">
    <location>
        <begin position="1"/>
        <end position="96"/>
    </location>
</feature>
<feature type="transmembrane region" description="Helical" evidence="1">
    <location>
        <begin position="59"/>
        <end position="81"/>
    </location>
</feature>
<feature type="glycosylation site" description="N-linked (GlcNAc...) asparagine" evidence="1">
    <location>
        <position position="4"/>
    </location>
</feature>
<name>YM030_YEAST</name>